<keyword id="KW-0150">Chloroplast</keyword>
<keyword id="KW-0186">Copper</keyword>
<keyword id="KW-1015">Disulfide bond</keyword>
<keyword id="KW-0479">Metal-binding</keyword>
<keyword id="KW-0560">Oxidoreductase</keyword>
<keyword id="KW-0934">Plastid</keyword>
<keyword id="KW-1185">Reference proteome</keyword>
<keyword id="KW-0883">Thioether bond</keyword>
<keyword id="KW-0793">Thylakoid</keyword>
<keyword id="KW-0809">Transit peptide</keyword>
<comment type="function">
    <text>Catalyzes the oxidation of mono- and o-diphenols to o-diquinones.</text>
</comment>
<comment type="catalytic activity">
    <reaction>
        <text>2 catechol + O2 = 2 1,2-benzoquinone + 2 H2O</text>
        <dbReference type="Rhea" id="RHEA:21632"/>
        <dbReference type="ChEBI" id="CHEBI:15377"/>
        <dbReference type="ChEBI" id="CHEBI:15379"/>
        <dbReference type="ChEBI" id="CHEBI:17253"/>
        <dbReference type="ChEBI" id="CHEBI:18135"/>
        <dbReference type="EC" id="1.10.3.1"/>
    </reaction>
</comment>
<comment type="cofactor">
    <cofactor evidence="2">
        <name>Cu(2+)</name>
        <dbReference type="ChEBI" id="CHEBI:29036"/>
    </cofactor>
    <text evidence="2">Binds 2 copper ions per subunit.</text>
</comment>
<comment type="subcellular location">
    <subcellularLocation>
        <location>Plastid</location>
        <location>Chloroplast thylakoid lumen</location>
    </subcellularLocation>
</comment>
<comment type="similarity">
    <text evidence="4">Belongs to the tyrosinase family.</text>
</comment>
<proteinExistence type="inferred from homology"/>
<name>PPOB_SOLLC</name>
<organism>
    <name type="scientific">Solanum lycopersicum</name>
    <name type="common">Tomato</name>
    <name type="synonym">Lycopersicon esculentum</name>
    <dbReference type="NCBI Taxonomy" id="4081"/>
    <lineage>
        <taxon>Eukaryota</taxon>
        <taxon>Viridiplantae</taxon>
        <taxon>Streptophyta</taxon>
        <taxon>Embryophyta</taxon>
        <taxon>Tracheophyta</taxon>
        <taxon>Spermatophyta</taxon>
        <taxon>Magnoliopsida</taxon>
        <taxon>eudicotyledons</taxon>
        <taxon>Gunneridae</taxon>
        <taxon>Pentapetalae</taxon>
        <taxon>asterids</taxon>
        <taxon>lamiids</taxon>
        <taxon>Solanales</taxon>
        <taxon>Solanaceae</taxon>
        <taxon>Solanoideae</taxon>
        <taxon>Solaneae</taxon>
        <taxon>Solanum</taxon>
        <taxon>Solanum subgen. Lycopersicon</taxon>
    </lineage>
</organism>
<reference key="1">
    <citation type="journal article" date="1993" name="Plant Mol. Biol.">
        <title>Organisation of the tomato polyphenol oxidase gene family.</title>
        <authorList>
            <person name="Newman S.M."/>
            <person name="Eannetta N.T."/>
            <person name="Yu H."/>
            <person name="Prince J.P."/>
            <person name="de Vicente M.C."/>
            <person name="Tanksley S.D."/>
            <person name="Steffens J.C."/>
        </authorList>
    </citation>
    <scope>NUCLEOTIDE SEQUENCE [GENOMIC DNA]</scope>
    <source>
        <strain>cv. VFNT Cherry</strain>
    </source>
</reference>
<evidence type="ECO:0000250" key="1"/>
<evidence type="ECO:0000250" key="2">
    <source>
        <dbReference type="UniProtKB" id="Q9ZP19"/>
    </source>
</evidence>
<evidence type="ECO:0000256" key="3">
    <source>
        <dbReference type="SAM" id="MobiDB-lite"/>
    </source>
</evidence>
<evidence type="ECO:0000305" key="4"/>
<dbReference type="EC" id="1.10.3.1"/>
<dbReference type="EMBL" id="Z12834">
    <property type="protein sequence ID" value="CAA78296.1"/>
    <property type="molecule type" value="Genomic_DNA"/>
</dbReference>
<dbReference type="PIR" id="S33540">
    <property type="entry name" value="S33540"/>
</dbReference>
<dbReference type="RefSeq" id="NP_001296326.1">
    <property type="nucleotide sequence ID" value="NM_001309397.1"/>
</dbReference>
<dbReference type="SMR" id="Q08304"/>
<dbReference type="STRING" id="4081.Q08304"/>
<dbReference type="PaxDb" id="4081-Solyc08g074680.2.1"/>
<dbReference type="GeneID" id="101258774"/>
<dbReference type="KEGG" id="sly:101258774"/>
<dbReference type="eggNOG" id="ENOG502QVBP">
    <property type="taxonomic scope" value="Eukaryota"/>
</dbReference>
<dbReference type="InParanoid" id="Q08304"/>
<dbReference type="OrthoDB" id="6132182at2759"/>
<dbReference type="Proteomes" id="UP000004994">
    <property type="component" value="Unplaced"/>
</dbReference>
<dbReference type="ExpressionAtlas" id="Q08304">
    <property type="expression patterns" value="baseline and differential"/>
</dbReference>
<dbReference type="GO" id="GO:0009543">
    <property type="term" value="C:chloroplast thylakoid lumen"/>
    <property type="evidence" value="ECO:0007669"/>
    <property type="project" value="UniProtKB-SubCell"/>
</dbReference>
<dbReference type="GO" id="GO:0004097">
    <property type="term" value="F:catechol oxidase activity"/>
    <property type="evidence" value="ECO:0007669"/>
    <property type="project" value="UniProtKB-EC"/>
</dbReference>
<dbReference type="GO" id="GO:0046872">
    <property type="term" value="F:metal ion binding"/>
    <property type="evidence" value="ECO:0007669"/>
    <property type="project" value="UniProtKB-KW"/>
</dbReference>
<dbReference type="GO" id="GO:0046148">
    <property type="term" value="P:pigment biosynthetic process"/>
    <property type="evidence" value="ECO:0007669"/>
    <property type="project" value="InterPro"/>
</dbReference>
<dbReference type="Gene3D" id="1.10.1280.10">
    <property type="entry name" value="Di-copper center containing domain from catechol oxidase"/>
    <property type="match status" value="1"/>
</dbReference>
<dbReference type="InterPro" id="IPR008922">
    <property type="entry name" value="Di-copper_centre_dom_sf"/>
</dbReference>
<dbReference type="InterPro" id="IPR016213">
    <property type="entry name" value="Polyphenol_oxidase"/>
</dbReference>
<dbReference type="InterPro" id="IPR022740">
    <property type="entry name" value="Polyphenol_oxidase_C"/>
</dbReference>
<dbReference type="InterPro" id="IPR022739">
    <property type="entry name" value="Polyphenol_oxidase_cen"/>
</dbReference>
<dbReference type="InterPro" id="IPR050316">
    <property type="entry name" value="Tyrosinase/Hemocyanin"/>
</dbReference>
<dbReference type="InterPro" id="IPR002227">
    <property type="entry name" value="Tyrosinase_Cu-bd"/>
</dbReference>
<dbReference type="PANTHER" id="PTHR11474:SF107">
    <property type="entry name" value="POLYPHENOL OXIDASE B, CHLOROPLASTIC"/>
    <property type="match status" value="1"/>
</dbReference>
<dbReference type="PANTHER" id="PTHR11474">
    <property type="entry name" value="TYROSINASE FAMILY MEMBER"/>
    <property type="match status" value="1"/>
</dbReference>
<dbReference type="Pfam" id="PF12142">
    <property type="entry name" value="PPO1_DWL"/>
    <property type="match status" value="1"/>
</dbReference>
<dbReference type="Pfam" id="PF12143">
    <property type="entry name" value="PPO1_KFDV"/>
    <property type="match status" value="1"/>
</dbReference>
<dbReference type="Pfam" id="PF00264">
    <property type="entry name" value="Tyrosinase"/>
    <property type="match status" value="1"/>
</dbReference>
<dbReference type="PIRSF" id="PIRSF000290">
    <property type="entry name" value="PPO_plant"/>
    <property type="match status" value="1"/>
</dbReference>
<dbReference type="PRINTS" id="PR00092">
    <property type="entry name" value="TYROSINASE"/>
</dbReference>
<dbReference type="SUPFAM" id="SSF48056">
    <property type="entry name" value="Di-copper centre-containing domain"/>
    <property type="match status" value="1"/>
</dbReference>
<dbReference type="PROSITE" id="PS00497">
    <property type="entry name" value="TYROSINASE_1"/>
    <property type="match status" value="1"/>
</dbReference>
<dbReference type="PROSITE" id="PS00498">
    <property type="entry name" value="TYROSINASE_2"/>
    <property type="match status" value="1"/>
</dbReference>
<accession>Q08304</accession>
<protein>
    <recommendedName>
        <fullName>Polyphenol oxidase B, chloroplastic</fullName>
        <shortName>PPO</shortName>
        <ecNumber>1.10.3.1</ecNumber>
    </recommendedName>
    <alternativeName>
        <fullName>Catechol oxidase</fullName>
    </alternativeName>
</protein>
<sequence length="596" mass="67227">MASVVCNSSSSTTTTTLKTPFTSLGSTPKPSQLFLHGKRNKTFKVSCKVINNNGNQDETNSVDRRNVLLGLGGLYGVANAIPLAASATPIPSPDLKTCGRATISDGPLVPYSCCPPPMPTNFDTIPYYKFPSMTKLRIRTPAHAVDEEYIAKYNLAISRMRDLDKTEPLNPLGFKQQANIHCAYCNGAYIIGGKELQVHNSWLFFPFHRWYLYFYERILGKLIDDPTFALPYWNWDHPKGMRLPPMFDREGSSLYDERRNQQVRNGTVLDLGSFGDKVETTQLQLMSNNLTLMYRQMVTNAPCPLLFFGAPYVLGNNVEAPGTIETIPHIPVHIWAGTVRGSKFPNGDVSYGEDMGNFYSAGLDPVFYCHHGNVDRMWNEWKAIGGKRRDISEKDWLNSEFFFYDEHKNPYRVKVRDCLDTKKMGYDYAPMPTPWRNFKPKSKASVGKVNTSTLPPANEVFPLAKMDKTISFAINRPASSRTQQEKNEQEEMLTFNNIRYDNRGYIRFDVFLNVDNNVNANELDKAEFAGSYTSLPHVHRAGENDHIAKVNFQLAITELLEDIGLEDEDTIAVTLVPKKGGEGISIENVEIKLVDC</sequence>
<feature type="transit peptide" description="Chloroplast" evidence="1">
    <location>
        <begin position="1"/>
        <end position="87"/>
    </location>
</feature>
<feature type="chain" id="PRO_0000035911" description="Polyphenol oxidase B, chloroplastic">
    <location>
        <begin position="88"/>
        <end position="596"/>
    </location>
</feature>
<feature type="region of interest" description="Disordered" evidence="3">
    <location>
        <begin position="1"/>
        <end position="23"/>
    </location>
</feature>
<feature type="compositionally biased region" description="Low complexity" evidence="3">
    <location>
        <begin position="8"/>
        <end position="23"/>
    </location>
</feature>
<feature type="binding site" evidence="2">
    <location>
        <position position="181"/>
    </location>
    <ligand>
        <name>Cu cation</name>
        <dbReference type="ChEBI" id="CHEBI:23378"/>
        <label>A</label>
    </ligand>
</feature>
<feature type="binding site" evidence="2">
    <location>
        <position position="199"/>
    </location>
    <ligand>
        <name>Cu cation</name>
        <dbReference type="ChEBI" id="CHEBI:23378"/>
        <label>A</label>
    </ligand>
</feature>
<feature type="binding site" evidence="2">
    <location>
        <position position="208"/>
    </location>
    <ligand>
        <name>Cu cation</name>
        <dbReference type="ChEBI" id="CHEBI:23378"/>
        <label>A</label>
    </ligand>
</feature>
<feature type="binding site" evidence="2">
    <location>
        <position position="329"/>
    </location>
    <ligand>
        <name>Cu cation</name>
        <dbReference type="ChEBI" id="CHEBI:23378"/>
        <label>B</label>
    </ligand>
</feature>
<feature type="binding site" evidence="2">
    <location>
        <position position="333"/>
    </location>
    <ligand>
        <name>Cu cation</name>
        <dbReference type="ChEBI" id="CHEBI:23378"/>
        <label>B</label>
    </ligand>
</feature>
<feature type="binding site" evidence="2">
    <location>
        <position position="371"/>
    </location>
    <ligand>
        <name>Cu cation</name>
        <dbReference type="ChEBI" id="CHEBI:23378"/>
        <label>B</label>
    </ligand>
</feature>
<feature type="disulfide bond" evidence="2">
    <location>
        <begin position="98"/>
        <end position="114"/>
    </location>
</feature>
<feature type="disulfide bond" evidence="2">
    <location>
        <begin position="113"/>
        <end position="182"/>
    </location>
</feature>
<feature type="cross-link" description="2'-(S-cysteinyl)-histidine (Cys-His)" evidence="1">
    <location>
        <begin position="185"/>
        <end position="199"/>
    </location>
</feature>